<sequence>MSISQDDILNAVAEMSVIQVVELIKAFEEKFGVTAAAGSAGPAAAAAVVEEQTEFNVMLLEAGEKKVNVIKAVRELTGLGLKEAKAVVDGAPGIVLEAVAKDAADKAKATLEEAGAKVELK</sequence>
<protein>
    <recommendedName>
        <fullName evidence="1">Large ribosomal subunit protein bL12</fullName>
    </recommendedName>
    <alternativeName>
        <fullName evidence="2">50S ribosomal protein L7/L12</fullName>
    </alternativeName>
</protein>
<name>RL7_PSESM</name>
<keyword id="KW-1185">Reference proteome</keyword>
<keyword id="KW-0687">Ribonucleoprotein</keyword>
<keyword id="KW-0689">Ribosomal protein</keyword>
<reference key="1">
    <citation type="journal article" date="2003" name="Proc. Natl. Acad. Sci. U.S.A.">
        <title>The complete genome sequence of the Arabidopsis and tomato pathogen Pseudomonas syringae pv. tomato DC3000.</title>
        <authorList>
            <person name="Buell C.R."/>
            <person name="Joardar V."/>
            <person name="Lindeberg M."/>
            <person name="Selengut J."/>
            <person name="Paulsen I.T."/>
            <person name="Gwinn M.L."/>
            <person name="Dodson R.J."/>
            <person name="DeBoy R.T."/>
            <person name="Durkin A.S."/>
            <person name="Kolonay J.F."/>
            <person name="Madupu R."/>
            <person name="Daugherty S.C."/>
            <person name="Brinkac L.M."/>
            <person name="Beanan M.J."/>
            <person name="Haft D.H."/>
            <person name="Nelson W.C."/>
            <person name="Davidsen T.M."/>
            <person name="Zafar N."/>
            <person name="Zhou L."/>
            <person name="Liu J."/>
            <person name="Yuan Q."/>
            <person name="Khouri H.M."/>
            <person name="Fedorova N.B."/>
            <person name="Tran B."/>
            <person name="Russell D."/>
            <person name="Berry K.J."/>
            <person name="Utterback T.R."/>
            <person name="Van Aken S.E."/>
            <person name="Feldblyum T.V."/>
            <person name="D'Ascenzo M."/>
            <person name="Deng W.-L."/>
            <person name="Ramos A.R."/>
            <person name="Alfano J.R."/>
            <person name="Cartinhour S."/>
            <person name="Chatterjee A.K."/>
            <person name="Delaney T.P."/>
            <person name="Lazarowitz S.G."/>
            <person name="Martin G.B."/>
            <person name="Schneider D.J."/>
            <person name="Tang X."/>
            <person name="Bender C.L."/>
            <person name="White O."/>
            <person name="Fraser C.M."/>
            <person name="Collmer A."/>
        </authorList>
    </citation>
    <scope>NUCLEOTIDE SEQUENCE [LARGE SCALE GENOMIC DNA]</scope>
    <source>
        <strain>ATCC BAA-871 / DC3000</strain>
    </source>
</reference>
<dbReference type="EMBL" id="AE016853">
    <property type="protein sequence ID" value="AAO54160.1"/>
    <property type="molecule type" value="Genomic_DNA"/>
</dbReference>
<dbReference type="RefSeq" id="NP_790465.1">
    <property type="nucleotide sequence ID" value="NC_004578.1"/>
</dbReference>
<dbReference type="RefSeq" id="WP_005768921.1">
    <property type="nucleotide sequence ID" value="NC_004578.1"/>
</dbReference>
<dbReference type="SMR" id="Q889X9"/>
<dbReference type="STRING" id="223283.PSPTO_0618"/>
<dbReference type="GeneID" id="73733811"/>
<dbReference type="KEGG" id="pst:PSPTO_0618"/>
<dbReference type="PATRIC" id="fig|223283.9.peg.624"/>
<dbReference type="eggNOG" id="COG0222">
    <property type="taxonomic scope" value="Bacteria"/>
</dbReference>
<dbReference type="HOGENOM" id="CLU_086499_3_2_6"/>
<dbReference type="OrthoDB" id="9811748at2"/>
<dbReference type="PhylomeDB" id="Q889X9"/>
<dbReference type="Proteomes" id="UP000002515">
    <property type="component" value="Chromosome"/>
</dbReference>
<dbReference type="GO" id="GO:0022625">
    <property type="term" value="C:cytosolic large ribosomal subunit"/>
    <property type="evidence" value="ECO:0007669"/>
    <property type="project" value="TreeGrafter"/>
</dbReference>
<dbReference type="GO" id="GO:0003729">
    <property type="term" value="F:mRNA binding"/>
    <property type="evidence" value="ECO:0007669"/>
    <property type="project" value="TreeGrafter"/>
</dbReference>
<dbReference type="GO" id="GO:0003735">
    <property type="term" value="F:structural constituent of ribosome"/>
    <property type="evidence" value="ECO:0007669"/>
    <property type="project" value="InterPro"/>
</dbReference>
<dbReference type="GO" id="GO:0006412">
    <property type="term" value="P:translation"/>
    <property type="evidence" value="ECO:0007669"/>
    <property type="project" value="UniProtKB-UniRule"/>
</dbReference>
<dbReference type="CDD" id="cd00387">
    <property type="entry name" value="Ribosomal_L7_L12"/>
    <property type="match status" value="1"/>
</dbReference>
<dbReference type="FunFam" id="3.30.1390.10:FF:000001">
    <property type="entry name" value="50S ribosomal protein L7/L12"/>
    <property type="match status" value="1"/>
</dbReference>
<dbReference type="Gene3D" id="3.30.1390.10">
    <property type="match status" value="1"/>
</dbReference>
<dbReference type="Gene3D" id="1.20.5.710">
    <property type="entry name" value="Single helix bin"/>
    <property type="match status" value="1"/>
</dbReference>
<dbReference type="HAMAP" id="MF_00368">
    <property type="entry name" value="Ribosomal_bL12"/>
    <property type="match status" value="1"/>
</dbReference>
<dbReference type="InterPro" id="IPR000206">
    <property type="entry name" value="Ribosomal_bL12"/>
</dbReference>
<dbReference type="InterPro" id="IPR013823">
    <property type="entry name" value="Ribosomal_bL12_C"/>
</dbReference>
<dbReference type="InterPro" id="IPR014719">
    <property type="entry name" value="Ribosomal_bL12_C/ClpS-like"/>
</dbReference>
<dbReference type="InterPro" id="IPR008932">
    <property type="entry name" value="Ribosomal_bL12_oligo"/>
</dbReference>
<dbReference type="InterPro" id="IPR036235">
    <property type="entry name" value="Ribosomal_bL12_oligo_N_sf"/>
</dbReference>
<dbReference type="NCBIfam" id="TIGR00855">
    <property type="entry name" value="L12"/>
    <property type="match status" value="1"/>
</dbReference>
<dbReference type="PANTHER" id="PTHR45987">
    <property type="entry name" value="39S RIBOSOMAL PROTEIN L12"/>
    <property type="match status" value="1"/>
</dbReference>
<dbReference type="PANTHER" id="PTHR45987:SF4">
    <property type="entry name" value="LARGE RIBOSOMAL SUBUNIT PROTEIN BL12M"/>
    <property type="match status" value="1"/>
</dbReference>
<dbReference type="Pfam" id="PF00542">
    <property type="entry name" value="Ribosomal_L12"/>
    <property type="match status" value="1"/>
</dbReference>
<dbReference type="Pfam" id="PF16320">
    <property type="entry name" value="Ribosomal_L12_N"/>
    <property type="match status" value="1"/>
</dbReference>
<dbReference type="SUPFAM" id="SSF54736">
    <property type="entry name" value="ClpS-like"/>
    <property type="match status" value="1"/>
</dbReference>
<dbReference type="SUPFAM" id="SSF48300">
    <property type="entry name" value="Ribosomal protein L7/12, oligomerisation (N-terminal) domain"/>
    <property type="match status" value="1"/>
</dbReference>
<feature type="chain" id="PRO_0000157564" description="Large ribosomal subunit protein bL12">
    <location>
        <begin position="1"/>
        <end position="121"/>
    </location>
</feature>
<accession>Q889X9</accession>
<comment type="function">
    <text evidence="1">Forms part of the ribosomal stalk which helps the ribosome interact with GTP-bound translation factors. Is thus essential for accurate translation.</text>
</comment>
<comment type="subunit">
    <text evidence="1">Homodimer. Part of the ribosomal stalk of the 50S ribosomal subunit. Forms a multimeric L10(L12)X complex, where L10 forms an elongated spine to which 2 to 4 L12 dimers bind in a sequential fashion. Binds GTP-bound translation factors.</text>
</comment>
<comment type="similarity">
    <text evidence="1">Belongs to the bacterial ribosomal protein bL12 family.</text>
</comment>
<proteinExistence type="inferred from homology"/>
<gene>
    <name evidence="1" type="primary">rplL</name>
    <name type="ordered locus">PSPTO_0618</name>
</gene>
<evidence type="ECO:0000255" key="1">
    <source>
        <dbReference type="HAMAP-Rule" id="MF_00368"/>
    </source>
</evidence>
<evidence type="ECO:0000305" key="2"/>
<organism>
    <name type="scientific">Pseudomonas syringae pv. tomato (strain ATCC BAA-871 / DC3000)</name>
    <dbReference type="NCBI Taxonomy" id="223283"/>
    <lineage>
        <taxon>Bacteria</taxon>
        <taxon>Pseudomonadati</taxon>
        <taxon>Pseudomonadota</taxon>
        <taxon>Gammaproteobacteria</taxon>
        <taxon>Pseudomonadales</taxon>
        <taxon>Pseudomonadaceae</taxon>
        <taxon>Pseudomonas</taxon>
    </lineage>
</organism>